<gene>
    <name type="primary">CCMB</name>
    <name type="synonym">YMF6</name>
</gene>
<comment type="function">
    <text>May be involved in the export of heme to the mitochondrion for the biogenesis of c-type cytochromes.</text>
</comment>
<comment type="subcellular location">
    <subcellularLocation>
        <location evidence="2">Mitochondrion membrane</location>
        <topology evidence="2">Multi-pass membrane protein</topology>
    </subcellularLocation>
</comment>
<comment type="similarity">
    <text evidence="2">Belongs to the CcmB/CycW/HelB family.</text>
</comment>
<protein>
    <recommendedName>
        <fullName>Putative cytochrome c biogenesis ccmB-like mitochondrial protein</fullName>
    </recommendedName>
    <alternativeName>
        <fullName>ORF 277</fullName>
    </alternativeName>
</protein>
<sequence>MKRVREENETLHLENARRSPPLASTHFLGFPCISLFYSQHKSTKKNIYLDLKTKKKELLPMVFALRAFKIFLKLFYQHILLNLSTLITTFSLFLLYIVVTPLMIGFSKDFLCHFHLGLIWICLLFSFLPERFFQNDFEDGTLELYYLSGYCLQKILLSKLYGHWVLQISGVFCSFPVLQLLYQFDQSKMNWFTIIIGSQIFTLMCGIHSCLALGITSNGWNSLQNLTTLPTLLPLIVFCTSIETEWFHVILLMGYLLLFLFFYPILVSITLQTLLAK</sequence>
<geneLocation type="mitochondrion"/>
<evidence type="ECO:0000255" key="1"/>
<evidence type="ECO:0000305" key="2"/>
<name>CCMB_MARPO</name>
<reference key="1">
    <citation type="journal article" date="1992" name="J. Mol. Biol.">
        <title>Gene organization deduced from the complete sequence of liverwort Marchantia polymorpha mitochondrial DNA. A primitive form of plant mitochondrial genome.</title>
        <authorList>
            <person name="Oda K."/>
            <person name="Yamato K."/>
            <person name="Ohta E."/>
            <person name="Nakamura Y."/>
            <person name="Takemura M."/>
            <person name="Nozato N."/>
            <person name="Akashi K."/>
            <person name="Kanegae T."/>
            <person name="Ogura Y."/>
            <person name="Kohchi T."/>
            <person name="Ohyama K."/>
        </authorList>
    </citation>
    <scope>NUCLEOTIDE SEQUENCE [GENOMIC DNA]</scope>
</reference>
<proteinExistence type="inferred from homology"/>
<accession>P38454</accession>
<dbReference type="EMBL" id="M68929">
    <property type="protein sequence ID" value="AAC09462.1"/>
    <property type="molecule type" value="Genomic_DNA"/>
</dbReference>
<dbReference type="PIR" id="S26008">
    <property type="entry name" value="S26008"/>
</dbReference>
<dbReference type="RefSeq" id="NP_054465.1">
    <property type="nucleotide sequence ID" value="NC_001660.1"/>
</dbReference>
<dbReference type="SMR" id="P38454"/>
<dbReference type="GeneID" id="2702649"/>
<dbReference type="GO" id="GO:0031966">
    <property type="term" value="C:mitochondrial membrane"/>
    <property type="evidence" value="ECO:0007669"/>
    <property type="project" value="UniProtKB-SubCell"/>
</dbReference>
<dbReference type="GO" id="GO:0015232">
    <property type="term" value="F:heme transmembrane transporter activity"/>
    <property type="evidence" value="ECO:0007669"/>
    <property type="project" value="InterPro"/>
</dbReference>
<dbReference type="GO" id="GO:0017004">
    <property type="term" value="P:cytochrome complex assembly"/>
    <property type="evidence" value="ECO:0007669"/>
    <property type="project" value="UniProtKB-KW"/>
</dbReference>
<dbReference type="InterPro" id="IPR003544">
    <property type="entry name" value="Cyt_c_biogenesis_CcmB"/>
</dbReference>
<dbReference type="PANTHER" id="PTHR30070:SF1">
    <property type="entry name" value="CYTOCHROME C BIOGENESIS B-RELATED"/>
    <property type="match status" value="1"/>
</dbReference>
<dbReference type="PANTHER" id="PTHR30070">
    <property type="entry name" value="HEME EXPORTER PROTEIN B"/>
    <property type="match status" value="1"/>
</dbReference>
<dbReference type="Pfam" id="PF03379">
    <property type="entry name" value="CcmB"/>
    <property type="match status" value="1"/>
</dbReference>
<dbReference type="PRINTS" id="PR01414">
    <property type="entry name" value="CCMBBIOGNSIS"/>
</dbReference>
<keyword id="KW-0201">Cytochrome c-type biogenesis</keyword>
<keyword id="KW-0472">Membrane</keyword>
<keyword id="KW-0496">Mitochondrion</keyword>
<keyword id="KW-0812">Transmembrane</keyword>
<keyword id="KW-1133">Transmembrane helix</keyword>
<keyword id="KW-0813">Transport</keyword>
<organism>
    <name type="scientific">Marchantia polymorpha</name>
    <name type="common">Common liverwort</name>
    <name type="synonym">Marchantia aquatica</name>
    <dbReference type="NCBI Taxonomy" id="3197"/>
    <lineage>
        <taxon>Eukaryota</taxon>
        <taxon>Viridiplantae</taxon>
        <taxon>Streptophyta</taxon>
        <taxon>Embryophyta</taxon>
        <taxon>Marchantiophyta</taxon>
        <taxon>Marchantiopsida</taxon>
        <taxon>Marchantiidae</taxon>
        <taxon>Marchantiales</taxon>
        <taxon>Marchantiaceae</taxon>
        <taxon>Marchantia</taxon>
    </lineage>
</organism>
<feature type="chain" id="PRO_0000201550" description="Putative cytochrome c biogenesis ccmB-like mitochondrial protein">
    <location>
        <begin position="1"/>
        <end position="277"/>
    </location>
</feature>
<feature type="transmembrane region" description="Helical" evidence="1">
    <location>
        <begin position="61"/>
        <end position="81"/>
    </location>
</feature>
<feature type="transmembrane region" description="Helical" evidence="1">
    <location>
        <begin position="110"/>
        <end position="130"/>
    </location>
</feature>
<feature type="transmembrane region" description="Helical" evidence="1">
    <location>
        <begin position="164"/>
        <end position="184"/>
    </location>
</feature>
<feature type="transmembrane region" description="Helical" evidence="1">
    <location>
        <begin position="194"/>
        <end position="214"/>
    </location>
</feature>
<feature type="transmembrane region" description="Helical" evidence="1">
    <location>
        <begin position="227"/>
        <end position="247"/>
    </location>
</feature>
<feature type="transmembrane region" description="Helical" evidence="1">
    <location>
        <begin position="249"/>
        <end position="269"/>
    </location>
</feature>